<protein>
    <recommendedName>
        <fullName>Probable trehalose-phosphate phosphatase 4</fullName>
        <shortName>OsTPP4</shortName>
        <ecNumber>3.1.3.12</ecNumber>
    </recommendedName>
    <alternativeName>
        <fullName>Trehalose 6-phosphate phosphatase</fullName>
    </alternativeName>
</protein>
<name>TPP4_ORYSJ</name>
<reference key="1">
    <citation type="journal article" date="2005" name="Nature">
        <title>The map-based sequence of the rice genome.</title>
        <authorList>
            <consortium name="International rice genome sequencing project (IRGSP)"/>
        </authorList>
    </citation>
    <scope>NUCLEOTIDE SEQUENCE [LARGE SCALE GENOMIC DNA]</scope>
    <source>
        <strain>cv. Nipponbare</strain>
    </source>
</reference>
<reference key="2">
    <citation type="journal article" date="2008" name="Nucleic Acids Res.">
        <title>The rice annotation project database (RAP-DB): 2008 update.</title>
        <authorList>
            <consortium name="The rice annotation project (RAP)"/>
        </authorList>
    </citation>
    <scope>GENOME REANNOTATION</scope>
    <source>
        <strain>cv. Nipponbare</strain>
    </source>
</reference>
<reference key="3">
    <citation type="journal article" date="2013" name="Rice">
        <title>Improvement of the Oryza sativa Nipponbare reference genome using next generation sequence and optical map data.</title>
        <authorList>
            <person name="Kawahara Y."/>
            <person name="de la Bastide M."/>
            <person name="Hamilton J.P."/>
            <person name="Kanamori H."/>
            <person name="McCombie W.R."/>
            <person name="Ouyang S."/>
            <person name="Schwartz D.C."/>
            <person name="Tanaka T."/>
            <person name="Wu J."/>
            <person name="Zhou S."/>
            <person name="Childs K.L."/>
            <person name="Davidson R.M."/>
            <person name="Lin H."/>
            <person name="Quesada-Ocampo L."/>
            <person name="Vaillancourt B."/>
            <person name="Sakai H."/>
            <person name="Lee S.S."/>
            <person name="Kim J."/>
            <person name="Numa H."/>
            <person name="Itoh T."/>
            <person name="Buell C.R."/>
            <person name="Matsumoto T."/>
        </authorList>
    </citation>
    <scope>GENOME REANNOTATION</scope>
    <source>
        <strain>cv. Nipponbare</strain>
    </source>
</reference>
<reference key="4">
    <citation type="journal article" date="2005" name="PLoS Biol.">
        <title>The genomes of Oryza sativa: a history of duplications.</title>
        <authorList>
            <person name="Yu J."/>
            <person name="Wang J."/>
            <person name="Lin W."/>
            <person name="Li S."/>
            <person name="Li H."/>
            <person name="Zhou J."/>
            <person name="Ni P."/>
            <person name="Dong W."/>
            <person name="Hu S."/>
            <person name="Zeng C."/>
            <person name="Zhang J."/>
            <person name="Zhang Y."/>
            <person name="Li R."/>
            <person name="Xu Z."/>
            <person name="Li S."/>
            <person name="Li X."/>
            <person name="Zheng H."/>
            <person name="Cong L."/>
            <person name="Lin L."/>
            <person name="Yin J."/>
            <person name="Geng J."/>
            <person name="Li G."/>
            <person name="Shi J."/>
            <person name="Liu J."/>
            <person name="Lv H."/>
            <person name="Li J."/>
            <person name="Wang J."/>
            <person name="Deng Y."/>
            <person name="Ran L."/>
            <person name="Shi X."/>
            <person name="Wang X."/>
            <person name="Wu Q."/>
            <person name="Li C."/>
            <person name="Ren X."/>
            <person name="Wang J."/>
            <person name="Wang X."/>
            <person name="Li D."/>
            <person name="Liu D."/>
            <person name="Zhang X."/>
            <person name="Ji Z."/>
            <person name="Zhao W."/>
            <person name="Sun Y."/>
            <person name="Zhang Z."/>
            <person name="Bao J."/>
            <person name="Han Y."/>
            <person name="Dong L."/>
            <person name="Ji J."/>
            <person name="Chen P."/>
            <person name="Wu S."/>
            <person name="Liu J."/>
            <person name="Xiao Y."/>
            <person name="Bu D."/>
            <person name="Tan J."/>
            <person name="Yang L."/>
            <person name="Ye C."/>
            <person name="Zhang J."/>
            <person name="Xu J."/>
            <person name="Zhou Y."/>
            <person name="Yu Y."/>
            <person name="Zhang B."/>
            <person name="Zhuang S."/>
            <person name="Wei H."/>
            <person name="Liu B."/>
            <person name="Lei M."/>
            <person name="Yu H."/>
            <person name="Li Y."/>
            <person name="Xu H."/>
            <person name="Wei S."/>
            <person name="He X."/>
            <person name="Fang L."/>
            <person name="Zhang Z."/>
            <person name="Zhang Y."/>
            <person name="Huang X."/>
            <person name="Su Z."/>
            <person name="Tong W."/>
            <person name="Li J."/>
            <person name="Tong Z."/>
            <person name="Li S."/>
            <person name="Ye J."/>
            <person name="Wang L."/>
            <person name="Fang L."/>
            <person name="Lei T."/>
            <person name="Chen C.-S."/>
            <person name="Chen H.-C."/>
            <person name="Xu Z."/>
            <person name="Li H."/>
            <person name="Huang H."/>
            <person name="Zhang F."/>
            <person name="Xu H."/>
            <person name="Li N."/>
            <person name="Zhao C."/>
            <person name="Li S."/>
            <person name="Dong L."/>
            <person name="Huang Y."/>
            <person name="Li L."/>
            <person name="Xi Y."/>
            <person name="Qi Q."/>
            <person name="Li W."/>
            <person name="Zhang B."/>
            <person name="Hu W."/>
            <person name="Zhang Y."/>
            <person name="Tian X."/>
            <person name="Jiao Y."/>
            <person name="Liang X."/>
            <person name="Jin J."/>
            <person name="Gao L."/>
            <person name="Zheng W."/>
            <person name="Hao B."/>
            <person name="Liu S.-M."/>
            <person name="Wang W."/>
            <person name="Yuan L."/>
            <person name="Cao M."/>
            <person name="McDermott J."/>
            <person name="Samudrala R."/>
            <person name="Wang J."/>
            <person name="Wong G.K.-S."/>
            <person name="Yang H."/>
        </authorList>
    </citation>
    <scope>NUCLEOTIDE SEQUENCE [LARGE SCALE GENOMIC DNA]</scope>
    <source>
        <strain>cv. Nipponbare</strain>
    </source>
</reference>
<reference key="5">
    <citation type="journal article" date="2003" name="Science">
        <title>Collection, mapping, and annotation of over 28,000 cDNA clones from japonica rice.</title>
        <authorList>
            <consortium name="The rice full-length cDNA consortium"/>
        </authorList>
    </citation>
    <scope>NUCLEOTIDE SEQUENCE [LARGE SCALE MRNA]</scope>
    <source>
        <strain>cv. Nipponbare</strain>
    </source>
</reference>
<reference key="6">
    <citation type="journal article" date="2005" name="Plant Mol. Biol.">
        <title>Functional identification of a trehalose 6-phosphate phosphatase gene that is involved in transient induction of trehalose biosynthesis during chilling stress in rice.</title>
        <authorList>
            <person name="Pramanik M.H."/>
            <person name="Imai R."/>
        </authorList>
    </citation>
    <scope>GENE FAMILY</scope>
    <scope>NOMENCLATURE</scope>
    <source>
        <strain>cv. Yukihikari</strain>
    </source>
</reference>
<gene>
    <name type="primary">TPP4</name>
    <name type="ordered locus">Os02g0753000</name>
    <name type="ordered locus">LOC_Os02g51680</name>
    <name type="ORF">OJ1288_G09.15</name>
    <name type="ORF">OsJ_08413</name>
</gene>
<organism>
    <name type="scientific">Oryza sativa subsp. japonica</name>
    <name type="common">Rice</name>
    <dbReference type="NCBI Taxonomy" id="39947"/>
    <lineage>
        <taxon>Eukaryota</taxon>
        <taxon>Viridiplantae</taxon>
        <taxon>Streptophyta</taxon>
        <taxon>Embryophyta</taxon>
        <taxon>Tracheophyta</taxon>
        <taxon>Spermatophyta</taxon>
        <taxon>Magnoliopsida</taxon>
        <taxon>Liliopsida</taxon>
        <taxon>Poales</taxon>
        <taxon>Poaceae</taxon>
        <taxon>BOP clade</taxon>
        <taxon>Oryzoideae</taxon>
        <taxon>Oryzeae</taxon>
        <taxon>Oryzinae</taxon>
        <taxon>Oryza</taxon>
        <taxon>Oryza sativa</taxon>
    </lineage>
</organism>
<proteinExistence type="evidence at transcript level"/>
<evidence type="ECO:0000250" key="1"/>
<evidence type="ECO:0000305" key="2"/>
<keyword id="KW-0378">Hydrolase</keyword>
<keyword id="KW-1185">Reference proteome</keyword>
<keyword id="KW-0346">Stress response</keyword>
<sequence>MTNQDVVVSEMGIAAGAALPGGPAGPAGGLFACRSAAASMRQTYLDLAAAAVAARSASCTSWADAMRASSPTRSSRSASDVDEFTAWVRKHPSALSKFEEIAAKSRGKKIVMFMDYDGTLSPIVADPDTAYMSDAMRAAVREVAKTFPTAIVSGRCRDKVRNFVGLSDLYYAGSHGMDIKGPSSNPESALCQPASEFLPMIDEVYKTLVEKTKSTPGAKVENNKFCLSVHFRCVDEKRWNALGEQVKAVIKEYPKLKLTQGRKVLEIRPSIEWDKGKALEFLLESLGFANCGDVMPVYIGDDRTDEDAFKVLRKRGQGLGILVSKCPKDTNASYSLQDPTEVMEFLLRLVEWKRKSSSSSLMIRPRV</sequence>
<dbReference type="EC" id="3.1.3.12"/>
<dbReference type="EMBL" id="AP004119">
    <property type="protein sequence ID" value="BAD15563.1"/>
    <property type="molecule type" value="Genomic_DNA"/>
</dbReference>
<dbReference type="EMBL" id="AP008208">
    <property type="protein sequence ID" value="BAF10057.1"/>
    <property type="molecule type" value="Genomic_DNA"/>
</dbReference>
<dbReference type="EMBL" id="AP014958">
    <property type="protein sequence ID" value="BAS80964.1"/>
    <property type="molecule type" value="Genomic_DNA"/>
</dbReference>
<dbReference type="EMBL" id="CM000139">
    <property type="protein sequence ID" value="EEE57820.1"/>
    <property type="molecule type" value="Genomic_DNA"/>
</dbReference>
<dbReference type="EMBL" id="AK121015">
    <property type="protein sequence ID" value="BAH00277.1"/>
    <property type="molecule type" value="mRNA"/>
</dbReference>
<dbReference type="RefSeq" id="XP_015623803.1">
    <property type="nucleotide sequence ID" value="XM_015768317.1"/>
</dbReference>
<dbReference type="SMR" id="Q6ZGP8"/>
<dbReference type="FunCoup" id="Q6ZGP8">
    <property type="interactions" value="141"/>
</dbReference>
<dbReference type="STRING" id="39947.Q6ZGP8"/>
<dbReference type="PaxDb" id="39947-Q6ZGP8"/>
<dbReference type="EnsemblPlants" id="Os02t0753000-01">
    <property type="protein sequence ID" value="Os02t0753000-01"/>
    <property type="gene ID" value="Os02g0753000"/>
</dbReference>
<dbReference type="Gramene" id="Os02t0753000-01">
    <property type="protein sequence ID" value="Os02t0753000-01"/>
    <property type="gene ID" value="Os02g0753000"/>
</dbReference>
<dbReference type="KEGG" id="dosa:Os02g0753000"/>
<dbReference type="eggNOG" id="KOG1050">
    <property type="taxonomic scope" value="Eukaryota"/>
</dbReference>
<dbReference type="HOGENOM" id="CLU_037265_1_2_1"/>
<dbReference type="InParanoid" id="Q6ZGP8"/>
<dbReference type="OMA" id="FEIRPMV"/>
<dbReference type="OrthoDB" id="411251at2759"/>
<dbReference type="UniPathway" id="UPA00299"/>
<dbReference type="Proteomes" id="UP000000763">
    <property type="component" value="Chromosome 2"/>
</dbReference>
<dbReference type="Proteomes" id="UP000007752">
    <property type="component" value="Chromosome 2"/>
</dbReference>
<dbReference type="Proteomes" id="UP000059680">
    <property type="component" value="Chromosome 2"/>
</dbReference>
<dbReference type="GO" id="GO:0004805">
    <property type="term" value="F:trehalose-phosphatase activity"/>
    <property type="evidence" value="ECO:0000318"/>
    <property type="project" value="GO_Central"/>
</dbReference>
<dbReference type="GO" id="GO:0005992">
    <property type="term" value="P:trehalose biosynthetic process"/>
    <property type="evidence" value="ECO:0000318"/>
    <property type="project" value="GO_Central"/>
</dbReference>
<dbReference type="CDD" id="cd01627">
    <property type="entry name" value="HAD_TPP"/>
    <property type="match status" value="1"/>
</dbReference>
<dbReference type="FunFam" id="3.30.70.1020:FF:000004">
    <property type="entry name" value="Trehalose 6-phosphate phosphatase"/>
    <property type="match status" value="1"/>
</dbReference>
<dbReference type="FunFam" id="3.40.50.1000:FF:000073">
    <property type="entry name" value="Trehalose 6-phosphate phosphatase"/>
    <property type="match status" value="1"/>
</dbReference>
<dbReference type="Gene3D" id="3.40.50.1000">
    <property type="entry name" value="HAD superfamily/HAD-like"/>
    <property type="match status" value="1"/>
</dbReference>
<dbReference type="Gene3D" id="3.30.70.1020">
    <property type="entry name" value="Trehalose-6-phosphate phosphatase related protein, domain 2"/>
    <property type="match status" value="1"/>
</dbReference>
<dbReference type="InterPro" id="IPR036412">
    <property type="entry name" value="HAD-like_sf"/>
</dbReference>
<dbReference type="InterPro" id="IPR006379">
    <property type="entry name" value="HAD-SF_hydro_IIB"/>
</dbReference>
<dbReference type="InterPro" id="IPR023214">
    <property type="entry name" value="HAD_sf"/>
</dbReference>
<dbReference type="InterPro" id="IPR044651">
    <property type="entry name" value="OTSB-like"/>
</dbReference>
<dbReference type="InterPro" id="IPR003337">
    <property type="entry name" value="Trehalose_PPase"/>
</dbReference>
<dbReference type="NCBIfam" id="TIGR01484">
    <property type="entry name" value="HAD-SF-IIB"/>
    <property type="match status" value="1"/>
</dbReference>
<dbReference type="NCBIfam" id="TIGR00685">
    <property type="entry name" value="T6PP"/>
    <property type="match status" value="1"/>
</dbReference>
<dbReference type="PANTHER" id="PTHR43768">
    <property type="entry name" value="TREHALOSE 6-PHOSPHATE PHOSPHATASE"/>
    <property type="match status" value="1"/>
</dbReference>
<dbReference type="PANTHER" id="PTHR43768:SF32">
    <property type="entry name" value="TREHALOSE-PHOSPHATE PHOSPHATASE C-RELATED"/>
    <property type="match status" value="1"/>
</dbReference>
<dbReference type="Pfam" id="PF02358">
    <property type="entry name" value="Trehalose_PPase"/>
    <property type="match status" value="1"/>
</dbReference>
<dbReference type="SUPFAM" id="SSF56784">
    <property type="entry name" value="HAD-like"/>
    <property type="match status" value="1"/>
</dbReference>
<accession>Q6ZGP8</accession>
<accession>A0A0P0VPT5</accession>
<comment type="function">
    <text evidence="1">Removes the phosphate from trehalose 6-phosphate to produce free trehalose. Trehalose accumulation in plant may improve abiotic stress tolerance (By similarity).</text>
</comment>
<comment type="catalytic activity">
    <reaction>
        <text>alpha,alpha-trehalose 6-phosphate + H2O = alpha,alpha-trehalose + phosphate</text>
        <dbReference type="Rhea" id="RHEA:23420"/>
        <dbReference type="ChEBI" id="CHEBI:15377"/>
        <dbReference type="ChEBI" id="CHEBI:16551"/>
        <dbReference type="ChEBI" id="CHEBI:43474"/>
        <dbReference type="ChEBI" id="CHEBI:58429"/>
        <dbReference type="EC" id="3.1.3.12"/>
    </reaction>
</comment>
<comment type="cofactor">
    <cofactor evidence="1">
        <name>a divalent metal cation</name>
        <dbReference type="ChEBI" id="CHEBI:60240"/>
    </cofactor>
</comment>
<comment type="pathway">
    <text>Glycan biosynthesis; trehalose biosynthesis.</text>
</comment>
<comment type="similarity">
    <text evidence="2">Belongs to the trehalose phosphatase family.</text>
</comment>
<feature type="chain" id="PRO_0000417656" description="Probable trehalose-phosphate phosphatase 4">
    <location>
        <begin position="1"/>
        <end position="367"/>
    </location>
</feature>